<protein>
    <recommendedName>
        <fullName evidence="1">Thiamine import ATP-binding protein ThiQ</fullName>
        <ecNumber evidence="1">7.6.2.15</ecNumber>
    </recommendedName>
</protein>
<organism>
    <name type="scientific">Histophilus somni (strain 129Pt)</name>
    <name type="common">Haemophilus somnus</name>
    <dbReference type="NCBI Taxonomy" id="205914"/>
    <lineage>
        <taxon>Bacteria</taxon>
        <taxon>Pseudomonadati</taxon>
        <taxon>Pseudomonadota</taxon>
        <taxon>Gammaproteobacteria</taxon>
        <taxon>Pasteurellales</taxon>
        <taxon>Pasteurellaceae</taxon>
        <taxon>Histophilus</taxon>
    </lineage>
</organism>
<evidence type="ECO:0000255" key="1">
    <source>
        <dbReference type="HAMAP-Rule" id="MF_01723"/>
    </source>
</evidence>
<keyword id="KW-0067">ATP-binding</keyword>
<keyword id="KW-0997">Cell inner membrane</keyword>
<keyword id="KW-1003">Cell membrane</keyword>
<keyword id="KW-0472">Membrane</keyword>
<keyword id="KW-0547">Nucleotide-binding</keyword>
<keyword id="KW-1278">Translocase</keyword>
<keyword id="KW-0813">Transport</keyword>
<dbReference type="EC" id="7.6.2.15" evidence="1"/>
<dbReference type="EMBL" id="CP000436">
    <property type="protein sequence ID" value="ABI25286.1"/>
    <property type="molecule type" value="Genomic_DNA"/>
</dbReference>
<dbReference type="SMR" id="Q0I354"/>
<dbReference type="KEGG" id="hso:HS_1011"/>
<dbReference type="eggNOG" id="COG3840">
    <property type="taxonomic scope" value="Bacteria"/>
</dbReference>
<dbReference type="HOGENOM" id="CLU_000604_1_22_6"/>
<dbReference type="GO" id="GO:0005886">
    <property type="term" value="C:plasma membrane"/>
    <property type="evidence" value="ECO:0007669"/>
    <property type="project" value="UniProtKB-SubCell"/>
</dbReference>
<dbReference type="GO" id="GO:0048502">
    <property type="term" value="F:ABC-type thiamine transporter activity"/>
    <property type="evidence" value="ECO:0007669"/>
    <property type="project" value="UniProtKB-EC"/>
</dbReference>
<dbReference type="GO" id="GO:0005524">
    <property type="term" value="F:ATP binding"/>
    <property type="evidence" value="ECO:0007669"/>
    <property type="project" value="UniProtKB-KW"/>
</dbReference>
<dbReference type="GO" id="GO:0016887">
    <property type="term" value="F:ATP hydrolysis activity"/>
    <property type="evidence" value="ECO:0007669"/>
    <property type="project" value="InterPro"/>
</dbReference>
<dbReference type="Gene3D" id="3.40.50.300">
    <property type="entry name" value="P-loop containing nucleotide triphosphate hydrolases"/>
    <property type="match status" value="1"/>
</dbReference>
<dbReference type="InterPro" id="IPR003593">
    <property type="entry name" value="AAA+_ATPase"/>
</dbReference>
<dbReference type="InterPro" id="IPR050093">
    <property type="entry name" value="ABC_SmlMolc_Importer"/>
</dbReference>
<dbReference type="InterPro" id="IPR003439">
    <property type="entry name" value="ABC_transporter-like_ATP-bd"/>
</dbReference>
<dbReference type="InterPro" id="IPR017871">
    <property type="entry name" value="ABC_transporter-like_CS"/>
</dbReference>
<dbReference type="InterPro" id="IPR027417">
    <property type="entry name" value="P-loop_NTPase"/>
</dbReference>
<dbReference type="InterPro" id="IPR005968">
    <property type="entry name" value="Thiamine_ABC_ThiQ"/>
</dbReference>
<dbReference type="NCBIfam" id="TIGR01277">
    <property type="entry name" value="thiQ"/>
    <property type="match status" value="1"/>
</dbReference>
<dbReference type="PANTHER" id="PTHR42781">
    <property type="entry name" value="SPERMIDINE/PUTRESCINE IMPORT ATP-BINDING PROTEIN POTA"/>
    <property type="match status" value="1"/>
</dbReference>
<dbReference type="PANTHER" id="PTHR42781:SF1">
    <property type="entry name" value="THIAMINE IMPORT ATP-BINDING PROTEIN THIQ"/>
    <property type="match status" value="1"/>
</dbReference>
<dbReference type="Pfam" id="PF00005">
    <property type="entry name" value="ABC_tran"/>
    <property type="match status" value="1"/>
</dbReference>
<dbReference type="SMART" id="SM00382">
    <property type="entry name" value="AAA"/>
    <property type="match status" value="1"/>
</dbReference>
<dbReference type="SUPFAM" id="SSF52540">
    <property type="entry name" value="P-loop containing nucleoside triphosphate hydrolases"/>
    <property type="match status" value="1"/>
</dbReference>
<dbReference type="PROSITE" id="PS00211">
    <property type="entry name" value="ABC_TRANSPORTER_1"/>
    <property type="match status" value="1"/>
</dbReference>
<dbReference type="PROSITE" id="PS50893">
    <property type="entry name" value="ABC_TRANSPORTER_2"/>
    <property type="match status" value="1"/>
</dbReference>
<dbReference type="PROSITE" id="PS51288">
    <property type="entry name" value="THIQ"/>
    <property type="match status" value="1"/>
</dbReference>
<gene>
    <name evidence="1" type="primary">thiQ</name>
    <name type="ordered locus">HS_1011</name>
</gene>
<name>THIQ_HISS1</name>
<sequence length="214" mass="24251">MIKLNTIFDYPNISLHFDLHISLGEKIAIIGESGAGKSTLLNLIAGFEPVKQGEIRLNGENHTYTAPHQRPVSILFQEHNLFTHLTVWQNIAIGLRADLKLSKEEIKQLEKVASAVGLTDFLSRLPKELSGGQRQRVALARCLLRDKPILLLDEPFSALDPHLRQEMLTLIDKFCREKQLTLLLVTHQLSEVIDKIDRIVEIKNGQATEREIPR</sequence>
<comment type="function">
    <text evidence="1">Part of the ABC transporter complex ThiBPQ involved in thiamine import. Responsible for energy coupling to the transport system.</text>
</comment>
<comment type="catalytic activity">
    <reaction evidence="1">
        <text>thiamine(out) + ATP + H2O = thiamine(in) + ADP + phosphate + H(+)</text>
        <dbReference type="Rhea" id="RHEA:29811"/>
        <dbReference type="ChEBI" id="CHEBI:15377"/>
        <dbReference type="ChEBI" id="CHEBI:15378"/>
        <dbReference type="ChEBI" id="CHEBI:18385"/>
        <dbReference type="ChEBI" id="CHEBI:30616"/>
        <dbReference type="ChEBI" id="CHEBI:43474"/>
        <dbReference type="ChEBI" id="CHEBI:456216"/>
        <dbReference type="EC" id="7.6.2.15"/>
    </reaction>
</comment>
<comment type="subunit">
    <text evidence="1">The complex is composed of two ATP-binding proteins (ThiQ), two transmembrane proteins (ThiP) and a solute-binding protein (ThiB).</text>
</comment>
<comment type="subcellular location">
    <subcellularLocation>
        <location evidence="1">Cell inner membrane</location>
        <topology evidence="1">Peripheral membrane protein</topology>
    </subcellularLocation>
</comment>
<comment type="similarity">
    <text evidence="1">Belongs to the ABC transporter superfamily. Thiamine importer (TC 3.A.1.19.1) family.</text>
</comment>
<proteinExistence type="inferred from homology"/>
<feature type="chain" id="PRO_0000274444" description="Thiamine import ATP-binding protein ThiQ">
    <location>
        <begin position="1"/>
        <end position="214"/>
    </location>
</feature>
<feature type="domain" description="ABC transporter" evidence="1">
    <location>
        <begin position="2"/>
        <end position="212"/>
    </location>
</feature>
<feature type="binding site" evidence="1">
    <location>
        <begin position="31"/>
        <end position="38"/>
    </location>
    <ligand>
        <name>ATP</name>
        <dbReference type="ChEBI" id="CHEBI:30616"/>
    </ligand>
</feature>
<reference key="1">
    <citation type="journal article" date="2007" name="J. Bacteriol.">
        <title>Complete genome sequence of Haemophilus somnus (Histophilus somni) strain 129Pt and comparison to Haemophilus ducreyi 35000HP and Haemophilus influenzae Rd.</title>
        <authorList>
            <person name="Challacombe J.F."/>
            <person name="Duncan A.J."/>
            <person name="Brettin T.S."/>
            <person name="Bruce D."/>
            <person name="Chertkov O."/>
            <person name="Detter J.C."/>
            <person name="Han C.S."/>
            <person name="Misra M."/>
            <person name="Richardson P."/>
            <person name="Tapia R."/>
            <person name="Thayer N."/>
            <person name="Xie G."/>
            <person name="Inzana T.J."/>
        </authorList>
    </citation>
    <scope>NUCLEOTIDE SEQUENCE [LARGE SCALE GENOMIC DNA]</scope>
    <source>
        <strain>129Pt</strain>
    </source>
</reference>
<accession>Q0I354</accession>